<organism>
    <name type="scientific">Escherichia coli O157:H7 (strain EC4115 / EHEC)</name>
    <dbReference type="NCBI Taxonomy" id="444450"/>
    <lineage>
        <taxon>Bacteria</taxon>
        <taxon>Pseudomonadati</taxon>
        <taxon>Pseudomonadota</taxon>
        <taxon>Gammaproteobacteria</taxon>
        <taxon>Enterobacterales</taxon>
        <taxon>Enterobacteriaceae</taxon>
        <taxon>Escherichia</taxon>
    </lineage>
</organism>
<name>MSCL_ECO5E</name>
<sequence>MSIIKEFREFAMRGNVVDLAVGVIIGAAFGKIVSSLVADIIMPPLGLLIGGIDFKQFAVTLRDAQGDIPAVVMHYGVFIQNVFDFLIVAFAIFMAIKLINKLNRKKEEPAAAPAPTKEEVLLTEIRDLLKEQNNRS</sequence>
<evidence type="ECO:0000255" key="1">
    <source>
        <dbReference type="HAMAP-Rule" id="MF_00115"/>
    </source>
</evidence>
<reference key="1">
    <citation type="journal article" date="2011" name="Proc. Natl. Acad. Sci. U.S.A.">
        <title>Genomic anatomy of Escherichia coli O157:H7 outbreaks.</title>
        <authorList>
            <person name="Eppinger M."/>
            <person name="Mammel M.K."/>
            <person name="Leclerc J.E."/>
            <person name="Ravel J."/>
            <person name="Cebula T.A."/>
        </authorList>
    </citation>
    <scope>NUCLEOTIDE SEQUENCE [LARGE SCALE GENOMIC DNA]</scope>
    <source>
        <strain>EC4115 / EHEC</strain>
    </source>
</reference>
<keyword id="KW-0997">Cell inner membrane</keyword>
<keyword id="KW-1003">Cell membrane</keyword>
<keyword id="KW-0407">Ion channel</keyword>
<keyword id="KW-0406">Ion transport</keyword>
<keyword id="KW-0472">Membrane</keyword>
<keyword id="KW-0812">Transmembrane</keyword>
<keyword id="KW-1133">Transmembrane helix</keyword>
<keyword id="KW-0813">Transport</keyword>
<dbReference type="EMBL" id="CP001164">
    <property type="protein sequence ID" value="ACI37287.1"/>
    <property type="molecule type" value="Genomic_DNA"/>
</dbReference>
<dbReference type="RefSeq" id="WP_000022442.1">
    <property type="nucleotide sequence ID" value="NC_011353.1"/>
</dbReference>
<dbReference type="SMR" id="B5YT10"/>
<dbReference type="GeneID" id="75173461"/>
<dbReference type="KEGG" id="ecf:ECH74115_4613"/>
<dbReference type="HOGENOM" id="CLU_095787_0_0_6"/>
<dbReference type="GO" id="GO:0005886">
    <property type="term" value="C:plasma membrane"/>
    <property type="evidence" value="ECO:0007669"/>
    <property type="project" value="UniProtKB-SubCell"/>
</dbReference>
<dbReference type="GO" id="GO:0008381">
    <property type="term" value="F:mechanosensitive monoatomic ion channel activity"/>
    <property type="evidence" value="ECO:0007669"/>
    <property type="project" value="UniProtKB-UniRule"/>
</dbReference>
<dbReference type="FunFam" id="1.10.1200.120:FF:000001">
    <property type="entry name" value="Large-conductance mechanosensitive channel"/>
    <property type="match status" value="1"/>
</dbReference>
<dbReference type="Gene3D" id="1.10.1200.120">
    <property type="entry name" value="Large-conductance mechanosensitive channel, MscL, domain 1"/>
    <property type="match status" value="1"/>
</dbReference>
<dbReference type="HAMAP" id="MF_00115">
    <property type="entry name" value="MscL"/>
    <property type="match status" value="1"/>
</dbReference>
<dbReference type="InterPro" id="IPR019823">
    <property type="entry name" value="Mechanosensitive_channel_CS"/>
</dbReference>
<dbReference type="InterPro" id="IPR001185">
    <property type="entry name" value="MS_channel"/>
</dbReference>
<dbReference type="InterPro" id="IPR037673">
    <property type="entry name" value="MSC/AndL"/>
</dbReference>
<dbReference type="InterPro" id="IPR036019">
    <property type="entry name" value="MscL_channel"/>
</dbReference>
<dbReference type="NCBIfam" id="TIGR00220">
    <property type="entry name" value="mscL"/>
    <property type="match status" value="1"/>
</dbReference>
<dbReference type="NCBIfam" id="NF001841">
    <property type="entry name" value="PRK00567.1-1"/>
    <property type="match status" value="1"/>
</dbReference>
<dbReference type="NCBIfam" id="NF001843">
    <property type="entry name" value="PRK00567.1-4"/>
    <property type="match status" value="1"/>
</dbReference>
<dbReference type="PANTHER" id="PTHR30266:SF2">
    <property type="entry name" value="LARGE-CONDUCTANCE MECHANOSENSITIVE CHANNEL"/>
    <property type="match status" value="1"/>
</dbReference>
<dbReference type="PANTHER" id="PTHR30266">
    <property type="entry name" value="MECHANOSENSITIVE CHANNEL MSCL"/>
    <property type="match status" value="1"/>
</dbReference>
<dbReference type="Pfam" id="PF01741">
    <property type="entry name" value="MscL"/>
    <property type="match status" value="1"/>
</dbReference>
<dbReference type="PRINTS" id="PR01264">
    <property type="entry name" value="MECHCHANNEL"/>
</dbReference>
<dbReference type="SUPFAM" id="SSF81330">
    <property type="entry name" value="Gated mechanosensitive channel"/>
    <property type="match status" value="1"/>
</dbReference>
<dbReference type="PROSITE" id="PS01327">
    <property type="entry name" value="MSCL"/>
    <property type="match status" value="1"/>
</dbReference>
<accession>B5YT10</accession>
<proteinExistence type="inferred from homology"/>
<comment type="function">
    <text evidence="1">Channel that opens in response to stretch forces in the membrane lipid bilayer. May participate in the regulation of osmotic pressure changes within the cell.</text>
</comment>
<comment type="subunit">
    <text evidence="1">Homopentamer.</text>
</comment>
<comment type="subcellular location">
    <subcellularLocation>
        <location evidence="1">Cell inner membrane</location>
        <topology evidence="1">Multi-pass membrane protein</topology>
    </subcellularLocation>
</comment>
<comment type="similarity">
    <text evidence="1">Belongs to the MscL family.</text>
</comment>
<protein>
    <recommendedName>
        <fullName evidence="1">Large-conductance mechanosensitive channel</fullName>
    </recommendedName>
</protein>
<feature type="chain" id="PRO_1000094891" description="Large-conductance mechanosensitive channel">
    <location>
        <begin position="1"/>
        <end position="136"/>
    </location>
</feature>
<feature type="transmembrane region" description="Helical" evidence="1">
    <location>
        <begin position="10"/>
        <end position="30"/>
    </location>
</feature>
<feature type="transmembrane region" description="Helical" evidence="1">
    <location>
        <begin position="76"/>
        <end position="96"/>
    </location>
</feature>
<gene>
    <name evidence="1" type="primary">mscL</name>
    <name type="ordered locus">ECH74115_4613</name>
</gene>